<reference key="1">
    <citation type="submission" date="2009-01" db="EMBL/GenBank/DDBJ databases">
        <title>Complete sequence of chromosome of Caldicellulosiruptor becscii DSM 6725.</title>
        <authorList>
            <person name="Lucas S."/>
            <person name="Copeland A."/>
            <person name="Lapidus A."/>
            <person name="Glavina del Rio T."/>
            <person name="Tice H."/>
            <person name="Bruce D."/>
            <person name="Goodwin L."/>
            <person name="Pitluck S."/>
            <person name="Sims D."/>
            <person name="Meincke L."/>
            <person name="Brettin T."/>
            <person name="Detter J.C."/>
            <person name="Han C."/>
            <person name="Larimer F."/>
            <person name="Land M."/>
            <person name="Hauser L."/>
            <person name="Kyrpides N."/>
            <person name="Ovchinnikova G."/>
            <person name="Kataeva I."/>
            <person name="Adams M.W.W."/>
        </authorList>
    </citation>
    <scope>NUCLEOTIDE SEQUENCE [LARGE SCALE GENOMIC DNA]</scope>
    <source>
        <strain>ATCC BAA-1888 / DSM 6725 / KCTC 15123 / Z-1320</strain>
    </source>
</reference>
<keyword id="KW-0004">4Fe-4S</keyword>
<keyword id="KW-0963">Cytoplasm</keyword>
<keyword id="KW-0408">Iron</keyword>
<keyword id="KW-0411">Iron-sulfur</keyword>
<keyword id="KW-0479">Metal-binding</keyword>
<keyword id="KW-0662">Pyridine nucleotide biosynthesis</keyword>
<keyword id="KW-0808">Transferase</keyword>
<organism>
    <name type="scientific">Caldicellulosiruptor bescii (strain ATCC BAA-1888 / DSM 6725 / KCTC 15123 / Z-1320)</name>
    <name type="common">Anaerocellum thermophilum</name>
    <dbReference type="NCBI Taxonomy" id="521460"/>
    <lineage>
        <taxon>Bacteria</taxon>
        <taxon>Bacillati</taxon>
        <taxon>Bacillota</taxon>
        <taxon>Bacillota incertae sedis</taxon>
        <taxon>Caldicellulosiruptorales</taxon>
        <taxon>Caldicellulosiruptoraceae</taxon>
        <taxon>Caldicellulosiruptor</taxon>
    </lineage>
</organism>
<name>NADA_CALBD</name>
<accession>B9MRK8</accession>
<gene>
    <name evidence="1" type="primary">nadA</name>
    <name type="ordered locus">Athe_1212</name>
</gene>
<dbReference type="EC" id="2.5.1.72" evidence="1"/>
<dbReference type="EMBL" id="CP001393">
    <property type="protein sequence ID" value="ACM60312.1"/>
    <property type="molecule type" value="Genomic_DNA"/>
</dbReference>
<dbReference type="RefSeq" id="WP_015907704.1">
    <property type="nucleotide sequence ID" value="NC_012034.1"/>
</dbReference>
<dbReference type="SMR" id="B9MRK8"/>
<dbReference type="STRING" id="521460.Athe_1212"/>
<dbReference type="GeneID" id="31772560"/>
<dbReference type="KEGG" id="ate:Athe_1212"/>
<dbReference type="eggNOG" id="COG0379">
    <property type="taxonomic scope" value="Bacteria"/>
</dbReference>
<dbReference type="HOGENOM" id="CLU_047382_0_0_9"/>
<dbReference type="UniPathway" id="UPA00253">
    <property type="reaction ID" value="UER00327"/>
</dbReference>
<dbReference type="Proteomes" id="UP000007723">
    <property type="component" value="Chromosome"/>
</dbReference>
<dbReference type="GO" id="GO:0005829">
    <property type="term" value="C:cytosol"/>
    <property type="evidence" value="ECO:0007669"/>
    <property type="project" value="TreeGrafter"/>
</dbReference>
<dbReference type="GO" id="GO:0051539">
    <property type="term" value="F:4 iron, 4 sulfur cluster binding"/>
    <property type="evidence" value="ECO:0007669"/>
    <property type="project" value="UniProtKB-KW"/>
</dbReference>
<dbReference type="GO" id="GO:0046872">
    <property type="term" value="F:metal ion binding"/>
    <property type="evidence" value="ECO:0007669"/>
    <property type="project" value="UniProtKB-KW"/>
</dbReference>
<dbReference type="GO" id="GO:0008987">
    <property type="term" value="F:quinolinate synthetase A activity"/>
    <property type="evidence" value="ECO:0007669"/>
    <property type="project" value="UniProtKB-UniRule"/>
</dbReference>
<dbReference type="GO" id="GO:0034628">
    <property type="term" value="P:'de novo' NAD biosynthetic process from L-aspartate"/>
    <property type="evidence" value="ECO:0007669"/>
    <property type="project" value="TreeGrafter"/>
</dbReference>
<dbReference type="FunFam" id="3.40.50.10800:FF:000001">
    <property type="entry name" value="Quinolinate synthase A"/>
    <property type="match status" value="1"/>
</dbReference>
<dbReference type="FunFam" id="3.40.50.10800:FF:000003">
    <property type="entry name" value="Quinolinate synthase A"/>
    <property type="match status" value="1"/>
</dbReference>
<dbReference type="Gene3D" id="3.40.50.10800">
    <property type="entry name" value="NadA-like"/>
    <property type="match status" value="3"/>
</dbReference>
<dbReference type="HAMAP" id="MF_00568">
    <property type="entry name" value="NadA_type2"/>
    <property type="match status" value="1"/>
</dbReference>
<dbReference type="InterPro" id="IPR003473">
    <property type="entry name" value="NadA"/>
</dbReference>
<dbReference type="InterPro" id="IPR036094">
    <property type="entry name" value="NadA_sf"/>
</dbReference>
<dbReference type="InterPro" id="IPR023066">
    <property type="entry name" value="Quinolinate_synth_type2"/>
</dbReference>
<dbReference type="NCBIfam" id="TIGR00550">
    <property type="entry name" value="nadA"/>
    <property type="match status" value="1"/>
</dbReference>
<dbReference type="NCBIfam" id="NF006878">
    <property type="entry name" value="PRK09375.1-2"/>
    <property type="match status" value="1"/>
</dbReference>
<dbReference type="PANTHER" id="PTHR30573:SF0">
    <property type="entry name" value="QUINOLINATE SYNTHASE, CHLOROPLASTIC"/>
    <property type="match status" value="1"/>
</dbReference>
<dbReference type="PANTHER" id="PTHR30573">
    <property type="entry name" value="QUINOLINATE SYNTHETASE A"/>
    <property type="match status" value="1"/>
</dbReference>
<dbReference type="Pfam" id="PF02445">
    <property type="entry name" value="NadA"/>
    <property type="match status" value="1"/>
</dbReference>
<dbReference type="SUPFAM" id="SSF142754">
    <property type="entry name" value="NadA-like"/>
    <property type="match status" value="1"/>
</dbReference>
<evidence type="ECO:0000255" key="1">
    <source>
        <dbReference type="HAMAP-Rule" id="MF_00568"/>
    </source>
</evidence>
<feature type="chain" id="PRO_1000146808" description="Quinolinate synthase">
    <location>
        <begin position="1"/>
        <end position="303"/>
    </location>
</feature>
<feature type="binding site" evidence="1">
    <location>
        <position position="24"/>
    </location>
    <ligand>
        <name>iminosuccinate</name>
        <dbReference type="ChEBI" id="CHEBI:77875"/>
    </ligand>
</feature>
<feature type="binding site" evidence="1">
    <location>
        <position position="41"/>
    </location>
    <ligand>
        <name>iminosuccinate</name>
        <dbReference type="ChEBI" id="CHEBI:77875"/>
    </ligand>
</feature>
<feature type="binding site" evidence="1">
    <location>
        <position position="86"/>
    </location>
    <ligand>
        <name>[4Fe-4S] cluster</name>
        <dbReference type="ChEBI" id="CHEBI:49883"/>
    </ligand>
</feature>
<feature type="binding site" evidence="1">
    <location>
        <begin position="112"/>
        <end position="114"/>
    </location>
    <ligand>
        <name>iminosuccinate</name>
        <dbReference type="ChEBI" id="CHEBI:77875"/>
    </ligand>
</feature>
<feature type="binding site" evidence="1">
    <location>
        <position position="129"/>
    </location>
    <ligand>
        <name>iminosuccinate</name>
        <dbReference type="ChEBI" id="CHEBI:77875"/>
    </ligand>
</feature>
<feature type="binding site" evidence="1">
    <location>
        <position position="172"/>
    </location>
    <ligand>
        <name>[4Fe-4S] cluster</name>
        <dbReference type="ChEBI" id="CHEBI:49883"/>
    </ligand>
</feature>
<feature type="binding site" evidence="1">
    <location>
        <begin position="198"/>
        <end position="200"/>
    </location>
    <ligand>
        <name>iminosuccinate</name>
        <dbReference type="ChEBI" id="CHEBI:77875"/>
    </ligand>
</feature>
<feature type="binding site" evidence="1">
    <location>
        <position position="215"/>
    </location>
    <ligand>
        <name>iminosuccinate</name>
        <dbReference type="ChEBI" id="CHEBI:77875"/>
    </ligand>
</feature>
<feature type="binding site" evidence="1">
    <location>
        <position position="260"/>
    </location>
    <ligand>
        <name>[4Fe-4S] cluster</name>
        <dbReference type="ChEBI" id="CHEBI:49883"/>
    </ligand>
</feature>
<comment type="function">
    <text evidence="1">Catalyzes the condensation of iminoaspartate with dihydroxyacetone phosphate to form quinolinate.</text>
</comment>
<comment type="catalytic activity">
    <reaction evidence="1">
        <text>iminosuccinate + dihydroxyacetone phosphate = quinolinate + phosphate + 2 H2O + H(+)</text>
        <dbReference type="Rhea" id="RHEA:25888"/>
        <dbReference type="ChEBI" id="CHEBI:15377"/>
        <dbReference type="ChEBI" id="CHEBI:15378"/>
        <dbReference type="ChEBI" id="CHEBI:29959"/>
        <dbReference type="ChEBI" id="CHEBI:43474"/>
        <dbReference type="ChEBI" id="CHEBI:57642"/>
        <dbReference type="ChEBI" id="CHEBI:77875"/>
        <dbReference type="EC" id="2.5.1.72"/>
    </reaction>
    <physiologicalReaction direction="left-to-right" evidence="1">
        <dbReference type="Rhea" id="RHEA:25889"/>
    </physiologicalReaction>
</comment>
<comment type="cofactor">
    <cofactor evidence="1">
        <name>[4Fe-4S] cluster</name>
        <dbReference type="ChEBI" id="CHEBI:49883"/>
    </cofactor>
    <text evidence="1">Binds 1 [4Fe-4S] cluster per subunit.</text>
</comment>
<comment type="pathway">
    <text evidence="1">Cofactor biosynthesis; NAD(+) biosynthesis; quinolinate from iminoaspartate: step 1/1.</text>
</comment>
<comment type="subcellular location">
    <subcellularLocation>
        <location evidence="1">Cytoplasm</location>
    </subcellularLocation>
</comment>
<comment type="similarity">
    <text evidence="1">Belongs to the quinolinate synthase family. Type 2 subfamily.</text>
</comment>
<sequence>MNIEVLKNEIYKLKEEKNALIVAHNYQIDEVQEIADFVGDSFYLSKVCAERPEKVIVFCGVHFMAESAKILSPHKKVLLPEIDAGCPLADMVTAEDVENLKKKYPDYSIVCYINSPASVKAKSDVICTSSNAVKIVREFPNDKIIFLPDKNLGSFVKKQVPEKDIILWEGFCITHYKIKKEDVEKAKSLHPNALVLVHPECRPEVVELADFVGSTKQIIDFANTSKEKEFIIGTEMGVLYSLKKLNPDKKFYILHPGMICPNMKKNTLQSVRDALLYERYQIEVEEEIMEGAKKALSKMLEMG</sequence>
<protein>
    <recommendedName>
        <fullName evidence="1">Quinolinate synthase</fullName>
        <ecNumber evidence="1">2.5.1.72</ecNumber>
    </recommendedName>
</protein>
<proteinExistence type="inferred from homology"/>